<proteinExistence type="inferred from homology"/>
<evidence type="ECO:0000255" key="1">
    <source>
        <dbReference type="HAMAP-Rule" id="MF_00454"/>
    </source>
</evidence>
<name>FLUC_FLAPJ</name>
<keyword id="KW-0997">Cell inner membrane</keyword>
<keyword id="KW-1003">Cell membrane</keyword>
<keyword id="KW-0407">Ion channel</keyword>
<keyword id="KW-0406">Ion transport</keyword>
<keyword id="KW-0472">Membrane</keyword>
<keyword id="KW-0479">Metal-binding</keyword>
<keyword id="KW-1185">Reference proteome</keyword>
<keyword id="KW-0915">Sodium</keyword>
<keyword id="KW-0812">Transmembrane</keyword>
<keyword id="KW-1133">Transmembrane helix</keyword>
<keyword id="KW-0813">Transport</keyword>
<comment type="function">
    <text evidence="1">Fluoride-specific ion channel. Important for reducing fluoride concentration in the cell, thus reducing its toxicity.</text>
</comment>
<comment type="catalytic activity">
    <reaction evidence="1">
        <text>fluoride(in) = fluoride(out)</text>
        <dbReference type="Rhea" id="RHEA:76159"/>
        <dbReference type="ChEBI" id="CHEBI:17051"/>
    </reaction>
    <physiologicalReaction direction="left-to-right" evidence="1">
        <dbReference type="Rhea" id="RHEA:76160"/>
    </physiologicalReaction>
</comment>
<comment type="activity regulation">
    <text evidence="1">Na(+) is not transported, but it plays an essential structural role and its presence is essential for fluoride channel function.</text>
</comment>
<comment type="subcellular location">
    <subcellularLocation>
        <location evidence="1">Cell inner membrane</location>
        <topology evidence="1">Multi-pass membrane protein</topology>
    </subcellularLocation>
</comment>
<comment type="similarity">
    <text evidence="1">Belongs to the fluoride channel Fluc/FEX (TC 1.A.43) family.</text>
</comment>
<feature type="chain" id="PRO_1000026386" description="Fluoride-specific ion channel FluC">
    <location>
        <begin position="1"/>
        <end position="124"/>
    </location>
</feature>
<feature type="transmembrane region" description="Helical" evidence="1">
    <location>
        <begin position="4"/>
        <end position="24"/>
    </location>
</feature>
<feature type="transmembrane region" description="Helical" evidence="1">
    <location>
        <begin position="35"/>
        <end position="55"/>
    </location>
</feature>
<feature type="transmembrane region" description="Helical" evidence="1">
    <location>
        <begin position="63"/>
        <end position="83"/>
    </location>
</feature>
<feature type="transmembrane region" description="Helical" evidence="1">
    <location>
        <begin position="96"/>
        <end position="116"/>
    </location>
</feature>
<feature type="binding site" evidence="1">
    <location>
        <position position="75"/>
    </location>
    <ligand>
        <name>Na(+)</name>
        <dbReference type="ChEBI" id="CHEBI:29101"/>
        <note>structural</note>
    </ligand>
</feature>
<feature type="binding site" evidence="1">
    <location>
        <position position="78"/>
    </location>
    <ligand>
        <name>Na(+)</name>
        <dbReference type="ChEBI" id="CHEBI:29101"/>
        <note>structural</note>
    </ligand>
</feature>
<accession>A6H0J1</accession>
<gene>
    <name evidence="1" type="primary">fluC</name>
    <name evidence="1" type="synonym">crcB</name>
    <name type="ordered locus">FP1798</name>
</gene>
<dbReference type="EMBL" id="AM398681">
    <property type="protein sequence ID" value="CAL43864.1"/>
    <property type="molecule type" value="Genomic_DNA"/>
</dbReference>
<dbReference type="RefSeq" id="WP_011963905.1">
    <property type="nucleotide sequence ID" value="NC_009613.3"/>
</dbReference>
<dbReference type="RefSeq" id="YP_001296669.1">
    <property type="nucleotide sequence ID" value="NC_009613.3"/>
</dbReference>
<dbReference type="SMR" id="A6H0J1"/>
<dbReference type="STRING" id="402612.FP1798"/>
<dbReference type="EnsemblBacteria" id="CAL43864">
    <property type="protein sequence ID" value="CAL43864"/>
    <property type="gene ID" value="FP1798"/>
</dbReference>
<dbReference type="GeneID" id="66552015"/>
<dbReference type="KEGG" id="fps:FP1798"/>
<dbReference type="PATRIC" id="fig|402612.5.peg.1820"/>
<dbReference type="eggNOG" id="COG0239">
    <property type="taxonomic scope" value="Bacteria"/>
</dbReference>
<dbReference type="HOGENOM" id="CLU_114342_3_2_10"/>
<dbReference type="OrthoDB" id="9815830at2"/>
<dbReference type="Proteomes" id="UP000006394">
    <property type="component" value="Chromosome"/>
</dbReference>
<dbReference type="GO" id="GO:0005886">
    <property type="term" value="C:plasma membrane"/>
    <property type="evidence" value="ECO:0007669"/>
    <property type="project" value="UniProtKB-SubCell"/>
</dbReference>
<dbReference type="GO" id="GO:0062054">
    <property type="term" value="F:fluoride channel activity"/>
    <property type="evidence" value="ECO:0007669"/>
    <property type="project" value="UniProtKB-UniRule"/>
</dbReference>
<dbReference type="GO" id="GO:0046872">
    <property type="term" value="F:metal ion binding"/>
    <property type="evidence" value="ECO:0007669"/>
    <property type="project" value="UniProtKB-KW"/>
</dbReference>
<dbReference type="GO" id="GO:0140114">
    <property type="term" value="P:cellular detoxification of fluoride"/>
    <property type="evidence" value="ECO:0007669"/>
    <property type="project" value="UniProtKB-UniRule"/>
</dbReference>
<dbReference type="HAMAP" id="MF_00454">
    <property type="entry name" value="FluC"/>
    <property type="match status" value="1"/>
</dbReference>
<dbReference type="InterPro" id="IPR003691">
    <property type="entry name" value="FluC"/>
</dbReference>
<dbReference type="NCBIfam" id="TIGR00494">
    <property type="entry name" value="crcB"/>
    <property type="match status" value="1"/>
</dbReference>
<dbReference type="PANTHER" id="PTHR28259">
    <property type="entry name" value="FLUORIDE EXPORT PROTEIN 1-RELATED"/>
    <property type="match status" value="1"/>
</dbReference>
<dbReference type="PANTHER" id="PTHR28259:SF1">
    <property type="entry name" value="FLUORIDE EXPORT PROTEIN 1-RELATED"/>
    <property type="match status" value="1"/>
</dbReference>
<dbReference type="Pfam" id="PF02537">
    <property type="entry name" value="CRCB"/>
    <property type="match status" value="1"/>
</dbReference>
<protein>
    <recommendedName>
        <fullName evidence="1">Fluoride-specific ion channel FluC</fullName>
    </recommendedName>
</protein>
<sequence length="124" mass="13706">MKTIFYIALGGGLGSVLRYLTTLVINKYVQTTFPYATFVTNIAGCLLIGLFFGYLEKQNAVSPYLKFFLITGLCGGYTTFSAFSNENIQLLQSNQILIAFLYISLSVFLGLMATWTGLIIAKEL</sequence>
<organism>
    <name type="scientific">Flavobacterium psychrophilum (strain ATCC 49511 / DSM 21280 / CIP 103535 / JIP02/86)</name>
    <dbReference type="NCBI Taxonomy" id="402612"/>
    <lineage>
        <taxon>Bacteria</taxon>
        <taxon>Pseudomonadati</taxon>
        <taxon>Bacteroidota</taxon>
        <taxon>Flavobacteriia</taxon>
        <taxon>Flavobacteriales</taxon>
        <taxon>Flavobacteriaceae</taxon>
        <taxon>Flavobacterium</taxon>
    </lineage>
</organism>
<reference key="1">
    <citation type="journal article" date="2007" name="Nat. Biotechnol.">
        <title>Complete genome sequence of the fish pathogen Flavobacterium psychrophilum.</title>
        <authorList>
            <person name="Duchaud E."/>
            <person name="Boussaha M."/>
            <person name="Loux V."/>
            <person name="Bernardet J.-F."/>
            <person name="Michel C."/>
            <person name="Kerouault B."/>
            <person name="Mondot S."/>
            <person name="Nicolas P."/>
            <person name="Bossy R."/>
            <person name="Caron C."/>
            <person name="Bessieres P."/>
            <person name="Gibrat J.-F."/>
            <person name="Claverol S."/>
            <person name="Dumetz F."/>
            <person name="Le Henaff M."/>
            <person name="Benmansour A."/>
        </authorList>
    </citation>
    <scope>NUCLEOTIDE SEQUENCE [LARGE SCALE GENOMIC DNA]</scope>
    <source>
        <strain>ATCC 49511 / DSM 21280 / CIP 103535 / JIP02/86</strain>
    </source>
</reference>